<feature type="chain" id="PRO_0000170564" description="Guanylate kinase">
    <location>
        <begin position="1"/>
        <end position="210"/>
    </location>
</feature>
<feature type="domain" description="Guanylate kinase-like">
    <location>
        <begin position="23"/>
        <end position="203"/>
    </location>
</feature>
<feature type="binding site" evidence="1">
    <location>
        <begin position="30"/>
        <end position="37"/>
    </location>
    <ligand>
        <name>ATP</name>
        <dbReference type="ChEBI" id="CHEBI:30616"/>
    </ligand>
</feature>
<reference key="1">
    <citation type="journal article" date="2001" name="Nature">
        <title>Massive gene decay in the leprosy bacillus.</title>
        <authorList>
            <person name="Cole S.T."/>
            <person name="Eiglmeier K."/>
            <person name="Parkhill J."/>
            <person name="James K.D."/>
            <person name="Thomson N.R."/>
            <person name="Wheeler P.R."/>
            <person name="Honore N."/>
            <person name="Garnier T."/>
            <person name="Churcher C.M."/>
            <person name="Harris D.E."/>
            <person name="Mungall K.L."/>
            <person name="Basham D."/>
            <person name="Brown D."/>
            <person name="Chillingworth T."/>
            <person name="Connor R."/>
            <person name="Davies R.M."/>
            <person name="Devlin K."/>
            <person name="Duthoy S."/>
            <person name="Feltwell T."/>
            <person name="Fraser A."/>
            <person name="Hamlin N."/>
            <person name="Holroyd S."/>
            <person name="Hornsby T."/>
            <person name="Jagels K."/>
            <person name="Lacroix C."/>
            <person name="Maclean J."/>
            <person name="Moule S."/>
            <person name="Murphy L.D."/>
            <person name="Oliver K."/>
            <person name="Quail M.A."/>
            <person name="Rajandream M.A."/>
            <person name="Rutherford K.M."/>
            <person name="Rutter S."/>
            <person name="Seeger K."/>
            <person name="Simon S."/>
            <person name="Simmonds M."/>
            <person name="Skelton J."/>
            <person name="Squares R."/>
            <person name="Squares S."/>
            <person name="Stevens K."/>
            <person name="Taylor K."/>
            <person name="Whitehead S."/>
            <person name="Woodward J.R."/>
            <person name="Barrell B.G."/>
        </authorList>
    </citation>
    <scope>NUCLEOTIDE SEQUENCE [LARGE SCALE GENOMIC DNA]</scope>
    <source>
        <strain>TN</strain>
    </source>
</reference>
<proteinExistence type="inferred from homology"/>
<protein>
    <recommendedName>
        <fullName>Guanylate kinase</fullName>
        <ecNumber>2.7.4.8</ecNumber>
    </recommendedName>
    <alternativeName>
        <fullName>GMP kinase</fullName>
    </alternativeName>
</protein>
<gene>
    <name type="primary">gmk</name>
    <name type="ordered locus">ML0541</name>
</gene>
<keyword id="KW-0067">ATP-binding</keyword>
<keyword id="KW-0963">Cytoplasm</keyword>
<keyword id="KW-0418">Kinase</keyword>
<keyword id="KW-0547">Nucleotide-binding</keyword>
<keyword id="KW-1185">Reference proteome</keyword>
<keyword id="KW-0808">Transferase</keyword>
<dbReference type="EC" id="2.7.4.8"/>
<dbReference type="EMBL" id="AL583918">
    <property type="protein sequence ID" value="CAC30049.1"/>
    <property type="molecule type" value="Genomic_DNA"/>
</dbReference>
<dbReference type="PIR" id="E86976">
    <property type="entry name" value="E86976"/>
</dbReference>
<dbReference type="RefSeq" id="NP_301460.1">
    <property type="nucleotide sequence ID" value="NC_002677.1"/>
</dbReference>
<dbReference type="SMR" id="Q9CCQ7"/>
<dbReference type="STRING" id="272631.gene:17574362"/>
<dbReference type="KEGG" id="mle:ML0541"/>
<dbReference type="PATRIC" id="fig|272631.5.peg.942"/>
<dbReference type="Leproma" id="ML0541"/>
<dbReference type="eggNOG" id="COG0194">
    <property type="taxonomic scope" value="Bacteria"/>
</dbReference>
<dbReference type="HOGENOM" id="CLU_001715_1_1_11"/>
<dbReference type="OrthoDB" id="9808150at2"/>
<dbReference type="Proteomes" id="UP000000806">
    <property type="component" value="Chromosome"/>
</dbReference>
<dbReference type="GO" id="GO:0005829">
    <property type="term" value="C:cytosol"/>
    <property type="evidence" value="ECO:0007669"/>
    <property type="project" value="TreeGrafter"/>
</dbReference>
<dbReference type="GO" id="GO:0005524">
    <property type="term" value="F:ATP binding"/>
    <property type="evidence" value="ECO:0007669"/>
    <property type="project" value="UniProtKB-UniRule"/>
</dbReference>
<dbReference type="GO" id="GO:0004385">
    <property type="term" value="F:guanylate kinase activity"/>
    <property type="evidence" value="ECO:0007669"/>
    <property type="project" value="UniProtKB-UniRule"/>
</dbReference>
<dbReference type="CDD" id="cd00071">
    <property type="entry name" value="GMPK"/>
    <property type="match status" value="1"/>
</dbReference>
<dbReference type="FunFam" id="3.30.63.10:FF:000002">
    <property type="entry name" value="Guanylate kinase 1"/>
    <property type="match status" value="1"/>
</dbReference>
<dbReference type="Gene3D" id="3.30.63.10">
    <property type="entry name" value="Guanylate Kinase phosphate binding domain"/>
    <property type="match status" value="1"/>
</dbReference>
<dbReference type="Gene3D" id="3.40.50.300">
    <property type="entry name" value="P-loop containing nucleotide triphosphate hydrolases"/>
    <property type="match status" value="1"/>
</dbReference>
<dbReference type="HAMAP" id="MF_00328">
    <property type="entry name" value="Guanylate_kinase"/>
    <property type="match status" value="1"/>
</dbReference>
<dbReference type="InterPro" id="IPR008145">
    <property type="entry name" value="GK/Ca_channel_bsu"/>
</dbReference>
<dbReference type="InterPro" id="IPR008144">
    <property type="entry name" value="Guanylate_kin-like_dom"/>
</dbReference>
<dbReference type="InterPro" id="IPR017665">
    <property type="entry name" value="Guanylate_kinase"/>
</dbReference>
<dbReference type="InterPro" id="IPR020590">
    <property type="entry name" value="Guanylate_kinase_CS"/>
</dbReference>
<dbReference type="InterPro" id="IPR027417">
    <property type="entry name" value="P-loop_NTPase"/>
</dbReference>
<dbReference type="NCBIfam" id="TIGR03263">
    <property type="entry name" value="guanyl_kin"/>
    <property type="match status" value="1"/>
</dbReference>
<dbReference type="PANTHER" id="PTHR23117:SF13">
    <property type="entry name" value="GUANYLATE KINASE"/>
    <property type="match status" value="1"/>
</dbReference>
<dbReference type="PANTHER" id="PTHR23117">
    <property type="entry name" value="GUANYLATE KINASE-RELATED"/>
    <property type="match status" value="1"/>
</dbReference>
<dbReference type="Pfam" id="PF00625">
    <property type="entry name" value="Guanylate_kin"/>
    <property type="match status" value="1"/>
</dbReference>
<dbReference type="SMART" id="SM00072">
    <property type="entry name" value="GuKc"/>
    <property type="match status" value="1"/>
</dbReference>
<dbReference type="SUPFAM" id="SSF52540">
    <property type="entry name" value="P-loop containing nucleoside triphosphate hydrolases"/>
    <property type="match status" value="1"/>
</dbReference>
<dbReference type="PROSITE" id="PS00856">
    <property type="entry name" value="GUANYLATE_KINASE_1"/>
    <property type="match status" value="1"/>
</dbReference>
<dbReference type="PROSITE" id="PS50052">
    <property type="entry name" value="GUANYLATE_KINASE_2"/>
    <property type="match status" value="1"/>
</dbReference>
<evidence type="ECO:0000250" key="1"/>
<evidence type="ECO:0000305" key="2"/>
<sequence length="210" mass="22658">MPVSARGAPDAEHWAWSEQTDKGRVVVLSGPSAVGKSTVVRCLRERVSNLHFSVSATTREPRPDEMDGVDYHFVSPARFQQLIDQGALLEWAEIHGGMHRSGTLAEPVRVAAAAGFPVLIEVDLAGARAVKKAMPEAIAVFLAPPSWEDLEARLVGRGTETPEAIRRRLETARIELAAQDDFDEVVVNRRLESACAELVSLLVGAVSGSA</sequence>
<name>KGUA_MYCLE</name>
<comment type="function">
    <text evidence="1">Essential for recycling GMP and indirectly, cGMP.</text>
</comment>
<comment type="catalytic activity">
    <reaction>
        <text>GMP + ATP = GDP + ADP</text>
        <dbReference type="Rhea" id="RHEA:20780"/>
        <dbReference type="ChEBI" id="CHEBI:30616"/>
        <dbReference type="ChEBI" id="CHEBI:58115"/>
        <dbReference type="ChEBI" id="CHEBI:58189"/>
        <dbReference type="ChEBI" id="CHEBI:456216"/>
        <dbReference type="EC" id="2.7.4.8"/>
    </reaction>
</comment>
<comment type="subcellular location">
    <subcellularLocation>
        <location evidence="1">Cytoplasm</location>
    </subcellularLocation>
</comment>
<comment type="similarity">
    <text evidence="2">Belongs to the guanylate kinase family.</text>
</comment>
<accession>Q9CCQ7</accession>
<organism>
    <name type="scientific">Mycobacterium leprae (strain TN)</name>
    <dbReference type="NCBI Taxonomy" id="272631"/>
    <lineage>
        <taxon>Bacteria</taxon>
        <taxon>Bacillati</taxon>
        <taxon>Actinomycetota</taxon>
        <taxon>Actinomycetes</taxon>
        <taxon>Mycobacteriales</taxon>
        <taxon>Mycobacteriaceae</taxon>
        <taxon>Mycobacterium</taxon>
    </lineage>
</organism>